<accession>P35867</accession>
<evidence type="ECO:0000255" key="1"/>
<evidence type="ECO:0000305" key="2"/>
<sequence length="794" mass="87210">MFGAEDPANSSLVDNLGLTLPWSLNDPHFLTAGFSASTTTAALMSTLWIIVFAVPSERILGSLKFAITAALIHITSIPLGIGIAHLIEEADLNRWGNNMLADVLLTPDFWVFGVAAFASASMPLLWRRRTRLFLFTITLTLLLYTGTLADVTMLTATIIGTVAGELNRHRKTPGGRWLPGSLTVREARIMTAILVTAVAAGPVLAALNPLTHGPFSSATKLIWQPLVTEEHMHHLCHTDSTSDACQGALDQLQQHGVGPSVANLIPLILTVVLAMGLSRGRRLAWILAVLAQLISIAVLMFQLTKLSADSTDLLWSVNAFSVIVPWLVALAVLVFSRRAFQVKIDTTRISKSLGALMVTWLATAALWILATLFLPHAFHPHPTLGLAFKELPFRYLPPTIETVLSHQLFPRSPAGWAVFEWTGTLFWLVVAATLYHLLMGVPSNKAHEDQENAATLLRSGSGDHLSWMTIWGGNTYWWAPENAGYVAYRVKRGIAITLGEPILGPDSSVSKAELAAQFEEFASNQGWIVAWYSVCEEFSKERINAGHHTLRVAEEAVLSSANADFKGKHFQNVRTARNRAAKEGVSSIWTTWADLSAEMQHKIITLSEEWVSDKALPEMGFTLGTVNELSDPDTYLLLAIDEEEHLHGVTSWLPVYEKGRIVGYTLDVMRRDPQGFKSVIEFLISEAVVIARDHDLEWMSMSGAPLSTPPGVADDGTIGQILELLGRAMEPFYGFRSLAASKNKFHPEHHGWYLCYRDELSLPSIGLAVAACYLNEFPLPNWLKKTATSAPSHS</sequence>
<name>Y966_CORGL</name>
<reference key="1">
    <citation type="journal article" date="2003" name="Appl. Microbiol. Biotechnol.">
        <title>The Corynebacterium glutamicum genome: features and impacts on biotechnological processes.</title>
        <authorList>
            <person name="Ikeda M."/>
            <person name="Nakagawa S."/>
        </authorList>
    </citation>
    <scope>NUCLEOTIDE SEQUENCE [LARGE SCALE GENOMIC DNA]</scope>
    <source>
        <strain>ATCC 13032 / DSM 20300 / JCM 1318 / BCRC 11384 / CCUG 27702 / LMG 3730 / NBRC 12168 / NCIMB 10025 / NRRL B-2784 / 534</strain>
    </source>
</reference>
<reference key="2">
    <citation type="journal article" date="2003" name="J. Biotechnol.">
        <title>The complete Corynebacterium glutamicum ATCC 13032 genome sequence and its impact on the production of L-aspartate-derived amino acids and vitamins.</title>
        <authorList>
            <person name="Kalinowski J."/>
            <person name="Bathe B."/>
            <person name="Bartels D."/>
            <person name="Bischoff N."/>
            <person name="Bott M."/>
            <person name="Burkovski A."/>
            <person name="Dusch N."/>
            <person name="Eggeling L."/>
            <person name="Eikmanns B.J."/>
            <person name="Gaigalat L."/>
            <person name="Goesmann A."/>
            <person name="Hartmann M."/>
            <person name="Huthmacher K."/>
            <person name="Kraemer R."/>
            <person name="Linke B."/>
            <person name="McHardy A.C."/>
            <person name="Meyer F."/>
            <person name="Moeckel B."/>
            <person name="Pfefferle W."/>
            <person name="Puehler A."/>
            <person name="Rey D.A."/>
            <person name="Rueckert C."/>
            <person name="Rupp O."/>
            <person name="Sahm H."/>
            <person name="Wendisch V.F."/>
            <person name="Wiegraebe I."/>
            <person name="Tauch A."/>
        </authorList>
    </citation>
    <scope>NUCLEOTIDE SEQUENCE [LARGE SCALE GENOMIC DNA]</scope>
    <source>
        <strain>ATCC 13032 / DSM 20300 / JCM 1318 / BCRC 11384 / CCUG 27702 / LMG 3730 / NBRC 12168 / NCIMB 10025 / NRRL B-2784 / 534</strain>
    </source>
</reference>
<reference key="3">
    <citation type="journal article" date="1991" name="Mol. Microbiol.">
        <title>Molecular analysis of the Corynebacterium glutamicum lysl gene involved in lysine uptake.</title>
        <authorList>
            <person name="Seep-Feldhaus A.H."/>
            <person name="Kalinowski J."/>
            <person name="Puehler A."/>
        </authorList>
    </citation>
    <scope>NUCLEOTIDE SEQUENCE [GENOMIC DNA] OF 1-368</scope>
    <source>
        <strain>ATCC 13032 / DSM 20300 / JCM 1318 / BCRC 11384 / CCUG 27702 / LMG 3730 / NBRC 12168 / NCIMB 10025 / NRRL B-2784 / 534</strain>
    </source>
</reference>
<organism>
    <name type="scientific">Corynebacterium glutamicum (strain ATCC 13032 / DSM 20300 / JCM 1318 / BCRC 11384 / CCUG 27702 / LMG 3730 / NBRC 12168 / NCIMB 10025 / NRRL B-2784 / 534)</name>
    <dbReference type="NCBI Taxonomy" id="196627"/>
    <lineage>
        <taxon>Bacteria</taxon>
        <taxon>Bacillati</taxon>
        <taxon>Actinomycetota</taxon>
        <taxon>Actinomycetes</taxon>
        <taxon>Mycobacteriales</taxon>
        <taxon>Corynebacteriaceae</taxon>
        <taxon>Corynebacterium</taxon>
    </lineage>
</organism>
<keyword id="KW-1003">Cell membrane</keyword>
<keyword id="KW-0472">Membrane</keyword>
<keyword id="KW-1185">Reference proteome</keyword>
<keyword id="KW-0812">Transmembrane</keyword>
<keyword id="KW-1133">Transmembrane helix</keyword>
<comment type="subcellular location">
    <subcellularLocation>
        <location evidence="2">Cell membrane</location>
        <topology evidence="2">Multi-pass membrane protein</topology>
    </subcellularLocation>
</comment>
<comment type="sequence caution" evidence="2">
    <conflict type="erroneous initiation">
        <sequence resource="EMBL-CDS" id="CAF19673"/>
    </conflict>
</comment>
<feature type="chain" id="PRO_0000214036" description="Uncharacterized protein Cgl0966/cg1103">
    <location>
        <begin position="1"/>
        <end position="794"/>
    </location>
</feature>
<feature type="transmembrane region" description="Helical" evidence="1">
    <location>
        <begin position="34"/>
        <end position="54"/>
    </location>
</feature>
<feature type="transmembrane region" description="Helical" evidence="1">
    <location>
        <begin position="67"/>
        <end position="87"/>
    </location>
</feature>
<feature type="transmembrane region" description="Helical" evidence="1">
    <location>
        <begin position="99"/>
        <end position="119"/>
    </location>
</feature>
<feature type="transmembrane region" description="Helical" evidence="1">
    <location>
        <begin position="132"/>
        <end position="152"/>
    </location>
</feature>
<feature type="transmembrane region" description="Helical" evidence="1">
    <location>
        <begin position="257"/>
        <end position="277"/>
    </location>
</feature>
<feature type="transmembrane region" description="Helical" evidence="1">
    <location>
        <begin position="283"/>
        <end position="303"/>
    </location>
</feature>
<feature type="transmembrane region" description="Helical" evidence="1">
    <location>
        <begin position="315"/>
        <end position="335"/>
    </location>
</feature>
<feature type="transmembrane region" description="Helical" evidence="1">
    <location>
        <begin position="353"/>
        <end position="373"/>
    </location>
</feature>
<feature type="transmembrane region" description="Helical" evidence="1">
    <location>
        <begin position="421"/>
        <end position="441"/>
    </location>
</feature>
<proteinExistence type="predicted"/>
<dbReference type="EMBL" id="BA000036">
    <property type="protein sequence ID" value="BAB98359.1"/>
    <property type="molecule type" value="Genomic_DNA"/>
</dbReference>
<dbReference type="EMBL" id="BX927150">
    <property type="protein sequence ID" value="CAF19673.1"/>
    <property type="status" value="ALT_INIT"/>
    <property type="molecule type" value="Genomic_DNA"/>
</dbReference>
<dbReference type="EMBL" id="X60312">
    <property type="protein sequence ID" value="CAA42857.1"/>
    <property type="molecule type" value="Genomic_DNA"/>
</dbReference>
<dbReference type="PIR" id="S18758">
    <property type="entry name" value="S18758"/>
</dbReference>
<dbReference type="RefSeq" id="NP_600193.1">
    <property type="nucleotide sequence ID" value="NC_003450.3"/>
</dbReference>
<dbReference type="SMR" id="P35867"/>
<dbReference type="STRING" id="196627.cg1103"/>
<dbReference type="KEGG" id="cgb:cg1103"/>
<dbReference type="KEGG" id="cgl:Cgl0966"/>
<dbReference type="PATRIC" id="fig|196627.13.peg.951"/>
<dbReference type="eggNOG" id="COG2898">
    <property type="taxonomic scope" value="Bacteria"/>
</dbReference>
<dbReference type="HOGENOM" id="CLU_017891_0_0_11"/>
<dbReference type="OrthoDB" id="594838at2"/>
<dbReference type="BioCyc" id="CORYNE:G18NG-10537-MONOMER"/>
<dbReference type="Proteomes" id="UP000000582">
    <property type="component" value="Chromosome"/>
</dbReference>
<dbReference type="Proteomes" id="UP000001009">
    <property type="component" value="Chromosome"/>
</dbReference>
<dbReference type="GO" id="GO:0005886">
    <property type="term" value="C:plasma membrane"/>
    <property type="evidence" value="ECO:0007669"/>
    <property type="project" value="UniProtKB-SubCell"/>
</dbReference>
<dbReference type="GO" id="GO:0016755">
    <property type="term" value="F:aminoacyltransferase activity"/>
    <property type="evidence" value="ECO:0007669"/>
    <property type="project" value="TreeGrafter"/>
</dbReference>
<dbReference type="GO" id="GO:0055091">
    <property type="term" value="P:phospholipid homeostasis"/>
    <property type="evidence" value="ECO:0007669"/>
    <property type="project" value="TreeGrafter"/>
</dbReference>
<dbReference type="InterPro" id="IPR024320">
    <property type="entry name" value="LPG_synthase_C"/>
</dbReference>
<dbReference type="InterPro" id="IPR051211">
    <property type="entry name" value="PG_lysyltransferase"/>
</dbReference>
<dbReference type="PANTHER" id="PTHR34697">
    <property type="entry name" value="PHOSPHATIDYLGLYCEROL LYSYLTRANSFERASE"/>
    <property type="match status" value="1"/>
</dbReference>
<dbReference type="PANTHER" id="PTHR34697:SF2">
    <property type="entry name" value="PHOSPHATIDYLGLYCEROL LYSYLTRANSFERASE"/>
    <property type="match status" value="1"/>
</dbReference>
<dbReference type="Pfam" id="PF09924">
    <property type="entry name" value="LPG_synthase_C"/>
    <property type="match status" value="1"/>
</dbReference>
<protein>
    <recommendedName>
        <fullName>Uncharacterized protein Cgl0966/cg1103</fullName>
    </recommendedName>
</protein>
<gene>
    <name type="ordered locus">Cgl0966</name>
    <name type="ordered locus">cg1103</name>
</gene>